<comment type="function">
    <text evidence="1">Cytoplasmic polyadenylation element binding protein that binds to and regulates the translation of specific mRNAs.</text>
</comment>
<keyword id="KW-1185">Reference proteome</keyword>
<keyword id="KW-0694">RNA-binding</keyword>
<feature type="chain" id="PRO_0000081516" description="Cytoplasmic polyadenylation element-binding protein 3">
    <location>
        <begin position="1"/>
        <end position="753"/>
    </location>
</feature>
<feature type="domain" description="RRM">
    <location>
        <begin position="298"/>
        <end position="320"/>
    </location>
</feature>
<feature type="region of interest" description="Disordered" evidence="2">
    <location>
        <begin position="111"/>
        <end position="286"/>
    </location>
</feature>
<feature type="region of interest" description="Disordered" evidence="2">
    <location>
        <begin position="567"/>
        <end position="589"/>
    </location>
</feature>
<feature type="compositionally biased region" description="Basic and acidic residues" evidence="2">
    <location>
        <begin position="131"/>
        <end position="142"/>
    </location>
</feature>
<feature type="compositionally biased region" description="Basic and acidic residues" evidence="2">
    <location>
        <begin position="175"/>
        <end position="188"/>
    </location>
</feature>
<feature type="compositionally biased region" description="Low complexity" evidence="2">
    <location>
        <begin position="227"/>
        <end position="239"/>
    </location>
</feature>
<feature type="compositionally biased region" description="Polar residues" evidence="2">
    <location>
        <begin position="265"/>
        <end position="279"/>
    </location>
</feature>
<feature type="compositionally biased region" description="Polar residues" evidence="2">
    <location>
        <begin position="578"/>
        <end position="589"/>
    </location>
</feature>
<organism>
    <name type="scientific">Caenorhabditis briggsae</name>
    <dbReference type="NCBI Taxonomy" id="6238"/>
    <lineage>
        <taxon>Eukaryota</taxon>
        <taxon>Metazoa</taxon>
        <taxon>Ecdysozoa</taxon>
        <taxon>Nematoda</taxon>
        <taxon>Chromadorea</taxon>
        <taxon>Rhabditida</taxon>
        <taxon>Rhabditina</taxon>
        <taxon>Rhabditomorpha</taxon>
        <taxon>Rhabditoidea</taxon>
        <taxon>Rhabditidae</taxon>
        <taxon>Peloderinae</taxon>
        <taxon>Caenorhabditis</taxon>
    </lineage>
</organism>
<accession>Q6E3D5</accession>
<accession>A8WW50</accession>
<reference key="1">
    <citation type="journal article" date="2004" name="Genome Res.">
        <title>A phylogeny of Caenorhabditis reveals frequent loss of introns during nematode evolution.</title>
        <authorList>
            <person name="Cho S."/>
            <person name="Jin S.W."/>
            <person name="Cohen A."/>
            <person name="Ellis R.E."/>
        </authorList>
    </citation>
    <scope>NUCLEOTIDE SEQUENCE [GENOMIC DNA / MRNA]</scope>
</reference>
<reference key="2">
    <citation type="journal article" date="2003" name="PLoS Biol.">
        <title>The genome sequence of Caenorhabditis briggsae: a platform for comparative genomics.</title>
        <authorList>
            <person name="Stein L.D."/>
            <person name="Bao Z."/>
            <person name="Blasiar D."/>
            <person name="Blumenthal T."/>
            <person name="Brent M.R."/>
            <person name="Chen N."/>
            <person name="Chinwalla A."/>
            <person name="Clarke L."/>
            <person name="Clee C."/>
            <person name="Coghlan A."/>
            <person name="Coulson A."/>
            <person name="D'Eustachio P."/>
            <person name="Fitch D.H.A."/>
            <person name="Fulton L.A."/>
            <person name="Fulton R.E."/>
            <person name="Griffiths-Jones S."/>
            <person name="Harris T.W."/>
            <person name="Hillier L.W."/>
            <person name="Kamath R."/>
            <person name="Kuwabara P.E."/>
            <person name="Mardis E.R."/>
            <person name="Marra M.A."/>
            <person name="Miner T.L."/>
            <person name="Minx P."/>
            <person name="Mullikin J.C."/>
            <person name="Plumb R.W."/>
            <person name="Rogers J."/>
            <person name="Schein J.E."/>
            <person name="Sohrmann M."/>
            <person name="Spieth J."/>
            <person name="Stajich J.E."/>
            <person name="Wei C."/>
            <person name="Willey D."/>
            <person name="Wilson R.K."/>
            <person name="Durbin R.M."/>
            <person name="Waterston R.H."/>
        </authorList>
    </citation>
    <scope>NUCLEOTIDE SEQUENCE [LARGE SCALE GENOMIC DNA]</scope>
    <source>
        <strain>AF16</strain>
    </source>
</reference>
<protein>
    <recommendedName>
        <fullName>Cytoplasmic polyadenylation element-binding protein 3</fullName>
    </recommendedName>
</protein>
<dbReference type="EMBL" id="AY589636">
    <property type="protein sequence ID" value="AAT72443.1"/>
    <property type="molecule type" value="Genomic_DNA"/>
</dbReference>
<dbReference type="EMBL" id="AY589606">
    <property type="protein sequence ID" value="AAT72414.1"/>
    <property type="molecule type" value="mRNA"/>
</dbReference>
<dbReference type="EMBL" id="HE600906">
    <property type="protein sequence ID" value="CAP24859.3"/>
    <property type="molecule type" value="Genomic_DNA"/>
</dbReference>
<dbReference type="SMR" id="Q6E3D5"/>
<dbReference type="FunCoup" id="Q6E3D5">
    <property type="interactions" value="4"/>
</dbReference>
<dbReference type="STRING" id="6238.Q6E3D5"/>
<dbReference type="EnsemblMetazoa" id="CBG04067.1">
    <property type="protein sequence ID" value="CBG04067.1"/>
    <property type="gene ID" value="WBGene00026813"/>
</dbReference>
<dbReference type="KEGG" id="cbr:CBG_04067"/>
<dbReference type="CTD" id="8581465"/>
<dbReference type="WormBase" id="CBG04067">
    <property type="protein sequence ID" value="CBP06639"/>
    <property type="gene ID" value="WBGene00026813"/>
    <property type="gene designation" value="Cbr-cpb-3"/>
</dbReference>
<dbReference type="eggNOG" id="KOG0129">
    <property type="taxonomic scope" value="Eukaryota"/>
</dbReference>
<dbReference type="HOGENOM" id="CLU_377774_0_0_1"/>
<dbReference type="InParanoid" id="Q6E3D5"/>
<dbReference type="OMA" id="MFCEDES"/>
<dbReference type="Proteomes" id="UP000008549">
    <property type="component" value="Unassembled WGS sequence"/>
</dbReference>
<dbReference type="GO" id="GO:0005737">
    <property type="term" value="C:cytoplasm"/>
    <property type="evidence" value="ECO:0000318"/>
    <property type="project" value="GO_Central"/>
</dbReference>
<dbReference type="GO" id="GO:0043005">
    <property type="term" value="C:neuron projection"/>
    <property type="evidence" value="ECO:0000318"/>
    <property type="project" value="GO_Central"/>
</dbReference>
<dbReference type="GO" id="GO:0005634">
    <property type="term" value="C:nucleus"/>
    <property type="evidence" value="ECO:0000318"/>
    <property type="project" value="GO_Central"/>
</dbReference>
<dbReference type="GO" id="GO:0045202">
    <property type="term" value="C:synapse"/>
    <property type="evidence" value="ECO:0000318"/>
    <property type="project" value="GO_Central"/>
</dbReference>
<dbReference type="GO" id="GO:0003730">
    <property type="term" value="F:mRNA 3'-UTR binding"/>
    <property type="evidence" value="ECO:0000318"/>
    <property type="project" value="GO_Central"/>
</dbReference>
<dbReference type="GO" id="GO:0000900">
    <property type="term" value="F:mRNA regulatory element binding translation repressor activity"/>
    <property type="evidence" value="ECO:0000318"/>
    <property type="project" value="GO_Central"/>
</dbReference>
<dbReference type="GO" id="GO:0043022">
    <property type="term" value="F:ribosome binding"/>
    <property type="evidence" value="ECO:0000318"/>
    <property type="project" value="GO_Central"/>
</dbReference>
<dbReference type="GO" id="GO:0008135">
    <property type="term" value="F:translation factor activity, RNA binding"/>
    <property type="evidence" value="ECO:0000318"/>
    <property type="project" value="GO_Central"/>
</dbReference>
<dbReference type="GO" id="GO:2000766">
    <property type="term" value="P:negative regulation of cytoplasmic translation"/>
    <property type="evidence" value="ECO:0000318"/>
    <property type="project" value="GO_Central"/>
</dbReference>
<dbReference type="CDD" id="cd19757">
    <property type="entry name" value="Bbox1"/>
    <property type="match status" value="1"/>
</dbReference>
<dbReference type="CDD" id="cd12723">
    <property type="entry name" value="RRM1_CPEB1"/>
    <property type="match status" value="1"/>
</dbReference>
<dbReference type="CDD" id="cd12725">
    <property type="entry name" value="RRM2_CPEB1"/>
    <property type="match status" value="1"/>
</dbReference>
<dbReference type="FunFam" id="3.30.70.330:FF:000483">
    <property type="entry name" value="Cytoplasmic polyadenylation element-binding protein 2"/>
    <property type="match status" value="1"/>
</dbReference>
<dbReference type="FunFam" id="3.30.70.330:FF:000677">
    <property type="entry name" value="Cytoplasmic polyadenylation element-binding protein 3"/>
    <property type="match status" value="1"/>
</dbReference>
<dbReference type="Gene3D" id="3.30.70.330">
    <property type="match status" value="2"/>
</dbReference>
<dbReference type="Gene3D" id="4.10.640.40">
    <property type="entry name" value="Cytoplasmic polyadenylation element-binding protein, ZZ domain"/>
    <property type="match status" value="1"/>
</dbReference>
<dbReference type="InterPro" id="IPR032296">
    <property type="entry name" value="CEBP_ZZ"/>
</dbReference>
<dbReference type="InterPro" id="IPR038446">
    <property type="entry name" value="CEBP_ZZ_sf"/>
</dbReference>
<dbReference type="InterPro" id="IPR034819">
    <property type="entry name" value="CPEB"/>
</dbReference>
<dbReference type="InterPro" id="IPR034977">
    <property type="entry name" value="CPEB1_RRM1"/>
</dbReference>
<dbReference type="InterPro" id="IPR012677">
    <property type="entry name" value="Nucleotide-bd_a/b_plait_sf"/>
</dbReference>
<dbReference type="InterPro" id="IPR035979">
    <property type="entry name" value="RBD_domain_sf"/>
</dbReference>
<dbReference type="InterPro" id="IPR000504">
    <property type="entry name" value="RRM_dom"/>
</dbReference>
<dbReference type="PANTHER" id="PTHR12566">
    <property type="entry name" value="CYTOPLASMIC POLYADENYLATION ELEMENT BINDING PROTEIN CPEB"/>
    <property type="match status" value="1"/>
</dbReference>
<dbReference type="PANTHER" id="PTHR12566:SF9">
    <property type="entry name" value="CYTOPLASMIC POLYADENYLATION ELEMENT-BINDING PROTEIN 1"/>
    <property type="match status" value="1"/>
</dbReference>
<dbReference type="Pfam" id="PF16366">
    <property type="entry name" value="CEBP_ZZ"/>
    <property type="match status" value="1"/>
</dbReference>
<dbReference type="Pfam" id="PF16367">
    <property type="entry name" value="RRM_7"/>
    <property type="match status" value="1"/>
</dbReference>
<dbReference type="SUPFAM" id="SSF54928">
    <property type="entry name" value="RNA-binding domain, RBD"/>
    <property type="match status" value="1"/>
</dbReference>
<gene>
    <name type="primary">cpb-3</name>
    <name type="ORF">CBG04067</name>
</gene>
<proteinExistence type="evidence at transcript level"/>
<name>CPB3_CAEBR</name>
<evidence type="ECO:0000250" key="1"/>
<evidence type="ECO:0000256" key="2">
    <source>
        <dbReference type="SAM" id="MobiDB-lite"/>
    </source>
</evidence>
<sequence>MNRNCASPEEGGTTEQLVKEASDIVERDGFENKKKPPTLKLEHVEVVGEKSPTPATVYDLFKKYKKPDIVTNSNGDDMNVGFDQLSSDEKNGFLRKLQMLTVSSRKSVKVVGESTPSSAGRLLKKFAPSRKPTEKISVDEPPSRFNFFGRSTKKLSDSDRPSSLPKKKSARRLLFGKEEQKPEPEVVKNRVLPAMTSQQSAKGAPIPINKPYRYQGPRGSLETPTDSPAKISSNSSSSSPIPPVPTRNHFTSMNEESPSKKRTFSRQGLSNRDNLSNGSWHGELPPRDYTSPTFSRKIFVGGVPWDITEAALKDSFGEFGSCAVEWPGQEARYRSGQSNIAPLTNLRNQSKYAGQAATGYVYMIFEDERAVASLLHECSQEIGGAGEWYFKIRAQRSKSTEIRQVQIIPWVTSDSMFCEDESLLETGIEPKRTVFVGALHGMMTAQVLHWIMEDCFGSVECVQLDTDKFKYPIGSGRVTFREHGAYFKAIEMGYLHVHTSKFRKRVQIDPFLESTSCMVCTTESAQCFCRNRNCFKYYCHTCWAIDHGKDNADDVHVPVIVPSSASKAYAGPHRRPHLTSNSLSKSHGCSTNNQLSHVLSPGFPMIVGGPSQTLSALYGYIQNNQQMMLTPAVYETPMTPPSNESNAKRRSFTEFQNPAIFFNPSSMMTPQKSATCSETPVPAFFTNSAAFLTPNSNYYGSPNHSSSNISQSPQQYYGANLYYGYMPPQVAYDGSTNGSKLSPIHVPHIPNYQ</sequence>